<proteinExistence type="inferred from homology"/>
<organism>
    <name type="scientific">Drosophila ananassae</name>
    <name type="common">Fruit fly</name>
    <dbReference type="NCBI Taxonomy" id="7217"/>
    <lineage>
        <taxon>Eukaryota</taxon>
        <taxon>Metazoa</taxon>
        <taxon>Ecdysozoa</taxon>
        <taxon>Arthropoda</taxon>
        <taxon>Hexapoda</taxon>
        <taxon>Insecta</taxon>
        <taxon>Pterygota</taxon>
        <taxon>Neoptera</taxon>
        <taxon>Endopterygota</taxon>
        <taxon>Diptera</taxon>
        <taxon>Brachycera</taxon>
        <taxon>Muscomorpha</taxon>
        <taxon>Ephydroidea</taxon>
        <taxon>Drosophilidae</taxon>
        <taxon>Drosophila</taxon>
        <taxon>Sophophora</taxon>
    </lineage>
</organism>
<reference evidence="6" key="1">
    <citation type="journal article" date="2007" name="Nature">
        <title>Evolution of genes and genomes on the Drosophila phylogeny.</title>
        <authorList>
            <consortium name="Drosophila 12 genomes consortium"/>
        </authorList>
    </citation>
    <scope>NUCLEOTIDE SEQUENCE [LARGE SCALE GENOMIC DNA]</scope>
    <source>
        <strain evidence="6">Tucson 14024-0371.13</strain>
    </source>
</reference>
<dbReference type="EMBL" id="CH902619">
    <property type="protein sequence ID" value="EDV36445.1"/>
    <property type="molecule type" value="Genomic_DNA"/>
</dbReference>
<dbReference type="SMR" id="B3MDR0"/>
<dbReference type="FunCoup" id="B3MDR0">
    <property type="interactions" value="1193"/>
</dbReference>
<dbReference type="STRING" id="7217.B3MDR0"/>
<dbReference type="EnsemblMetazoa" id="FBtr0117660">
    <property type="protein sequence ID" value="FBpp0116152"/>
    <property type="gene ID" value="FBgn0089994"/>
</dbReference>
<dbReference type="EnsemblMetazoa" id="XM_001959587.4">
    <property type="protein sequence ID" value="XP_001959623.1"/>
    <property type="gene ID" value="LOC6495804"/>
</dbReference>
<dbReference type="GeneID" id="6495804"/>
<dbReference type="KEGG" id="dan:6495804"/>
<dbReference type="CTD" id="36460"/>
<dbReference type="eggNOG" id="KOG3953">
    <property type="taxonomic scope" value="Eukaryota"/>
</dbReference>
<dbReference type="HOGENOM" id="CLU_046756_1_0_1"/>
<dbReference type="InParanoid" id="B3MDR0"/>
<dbReference type="OMA" id="ATKRASM"/>
<dbReference type="OrthoDB" id="2398163at2759"/>
<dbReference type="PhylomeDB" id="B3MDR0"/>
<dbReference type="UniPathway" id="UPA00143"/>
<dbReference type="Proteomes" id="UP000007801">
    <property type="component" value="Unassembled WGS sequence"/>
</dbReference>
<dbReference type="GO" id="GO:0005938">
    <property type="term" value="C:cell cortex"/>
    <property type="evidence" value="ECO:0007669"/>
    <property type="project" value="EnsemblMetazoa"/>
</dbReference>
<dbReference type="GO" id="GO:0031594">
    <property type="term" value="C:neuromuscular junction"/>
    <property type="evidence" value="ECO:0000250"/>
    <property type="project" value="UniProtKB"/>
</dbReference>
<dbReference type="GO" id="GO:0005634">
    <property type="term" value="C:nucleus"/>
    <property type="evidence" value="ECO:0007669"/>
    <property type="project" value="EnsemblMetazoa"/>
</dbReference>
<dbReference type="GO" id="GO:0045495">
    <property type="term" value="C:pole plasm"/>
    <property type="evidence" value="ECO:0007669"/>
    <property type="project" value="EnsemblMetazoa"/>
</dbReference>
<dbReference type="GO" id="GO:0019005">
    <property type="term" value="C:SCF ubiquitin ligase complex"/>
    <property type="evidence" value="ECO:0007669"/>
    <property type="project" value="EnsemblMetazoa"/>
</dbReference>
<dbReference type="GO" id="GO:0010629">
    <property type="term" value="P:negative regulation of gene expression"/>
    <property type="evidence" value="ECO:0007669"/>
    <property type="project" value="EnsemblMetazoa"/>
</dbReference>
<dbReference type="GO" id="GO:0045886">
    <property type="term" value="P:negative regulation of synaptic assembly at neuromuscular junction"/>
    <property type="evidence" value="ECO:0000250"/>
    <property type="project" value="UniProtKB"/>
</dbReference>
<dbReference type="GO" id="GO:0007274">
    <property type="term" value="P:neuromuscular synaptic transmission"/>
    <property type="evidence" value="ECO:0000250"/>
    <property type="project" value="UniProtKB"/>
</dbReference>
<dbReference type="GO" id="GO:0045732">
    <property type="term" value="P:positive regulation of protein catabolic process"/>
    <property type="evidence" value="ECO:0007669"/>
    <property type="project" value="EnsemblMetazoa"/>
</dbReference>
<dbReference type="GO" id="GO:0043161">
    <property type="term" value="P:proteasome-mediated ubiquitin-dependent protein catabolic process"/>
    <property type="evidence" value="ECO:0007669"/>
    <property type="project" value="TreeGrafter"/>
</dbReference>
<dbReference type="GO" id="GO:0016567">
    <property type="term" value="P:protein ubiquitination"/>
    <property type="evidence" value="ECO:0007669"/>
    <property type="project" value="UniProtKB-UniPathway"/>
</dbReference>
<dbReference type="GO" id="GO:0060386">
    <property type="term" value="P:synapse assembly involved in innervation"/>
    <property type="evidence" value="ECO:0007669"/>
    <property type="project" value="TreeGrafter"/>
</dbReference>
<dbReference type="CDD" id="cd12907">
    <property type="entry name" value="SPRY_Fbox"/>
    <property type="match status" value="1"/>
</dbReference>
<dbReference type="FunFam" id="1.20.1280.50:FF:000140">
    <property type="entry name" value="F-box/SPRY domain-containing protein 1"/>
    <property type="match status" value="1"/>
</dbReference>
<dbReference type="FunFam" id="2.60.120.920:FF:000017">
    <property type="entry name" value="F-box/SPRY domain-containing protein 1"/>
    <property type="match status" value="1"/>
</dbReference>
<dbReference type="Gene3D" id="1.20.1280.50">
    <property type="match status" value="1"/>
</dbReference>
<dbReference type="Gene3D" id="2.60.120.920">
    <property type="match status" value="1"/>
</dbReference>
<dbReference type="InterPro" id="IPR001870">
    <property type="entry name" value="B30.2/SPRY"/>
</dbReference>
<dbReference type="InterPro" id="IPR043136">
    <property type="entry name" value="B30.2/SPRY_sf"/>
</dbReference>
<dbReference type="InterPro" id="IPR013320">
    <property type="entry name" value="ConA-like_dom_sf"/>
</dbReference>
<dbReference type="InterPro" id="IPR036047">
    <property type="entry name" value="F-box-like_dom_sf"/>
</dbReference>
<dbReference type="InterPro" id="IPR001810">
    <property type="entry name" value="F-box_dom"/>
</dbReference>
<dbReference type="InterPro" id="IPR050672">
    <property type="entry name" value="FBXO45-Fsn/SPSB_families"/>
</dbReference>
<dbReference type="InterPro" id="IPR003877">
    <property type="entry name" value="SPRY_dom"/>
</dbReference>
<dbReference type="InterPro" id="IPR035784">
    <property type="entry name" value="SPRY_FBXO45"/>
</dbReference>
<dbReference type="PANTHER" id="PTHR12245:SF7">
    <property type="entry name" value="F-BOX_SPRY DOMAIN-CONTAINING PROTEIN 1"/>
    <property type="match status" value="1"/>
</dbReference>
<dbReference type="PANTHER" id="PTHR12245">
    <property type="entry name" value="SPRY DOMAIN CONTAINING SOCS BOX PROTEIN"/>
    <property type="match status" value="1"/>
</dbReference>
<dbReference type="Pfam" id="PF12937">
    <property type="entry name" value="F-box-like"/>
    <property type="match status" value="1"/>
</dbReference>
<dbReference type="Pfam" id="PF00622">
    <property type="entry name" value="SPRY"/>
    <property type="match status" value="1"/>
</dbReference>
<dbReference type="SMART" id="SM00449">
    <property type="entry name" value="SPRY"/>
    <property type="match status" value="1"/>
</dbReference>
<dbReference type="SUPFAM" id="SSF49899">
    <property type="entry name" value="Concanavalin A-like lectins/glucanases"/>
    <property type="match status" value="1"/>
</dbReference>
<dbReference type="SUPFAM" id="SSF81383">
    <property type="entry name" value="F-box domain"/>
    <property type="match status" value="1"/>
</dbReference>
<dbReference type="PROSITE" id="PS50188">
    <property type="entry name" value="B302_SPRY"/>
    <property type="match status" value="1"/>
</dbReference>
<sequence length="255" mass="28775">MVDPVAALCNYNVLEVIFSYLELDDLSHCSQVCKSWNLFLNDENSDVWRWHCLNKLPKEALKSDLLSSVSTYKTKLRAYFHAWSPNDCSRNVYIKPNGFTLHRNPVAQSTDAARGKIGFRHGRHAWEVIWEGPLGTVAVIGISTKEAVLQCHGYVALLGSDDQSWGWNLVENHLLHNGDMQGSYPLLNNAPKYQVGERIRIILDCDDNTLSFEKNYEFLGVAFRGLPDKKLYPTVSAVYGNTEVSMVYLGTPMDG</sequence>
<keyword id="KW-0524">Neurogenesis</keyword>
<keyword id="KW-1185">Reference proteome</keyword>
<keyword id="KW-0770">Synapse</keyword>
<keyword id="KW-0833">Ubl conjugation pathway</keyword>
<gene>
    <name evidence="2" type="primary">Fsn</name>
    <name type="ORF">GF12960</name>
</gene>
<protein>
    <recommendedName>
        <fullName evidence="2">F-box/SPRY domain-containing protein 1</fullName>
    </recommendedName>
</protein>
<evidence type="ECO:0000250" key="1"/>
<evidence type="ECO:0000250" key="2">
    <source>
        <dbReference type="UniProtKB" id="Q9V6L9"/>
    </source>
</evidence>
<evidence type="ECO:0000255" key="3"/>
<evidence type="ECO:0000255" key="4">
    <source>
        <dbReference type="PROSITE-ProRule" id="PRU00548"/>
    </source>
</evidence>
<evidence type="ECO:0000305" key="5"/>
<evidence type="ECO:0000312" key="6">
    <source>
        <dbReference type="EMBL" id="EDV36445.1"/>
    </source>
</evidence>
<comment type="function">
    <text evidence="1">Required in the presynaptic motoneuron to down-regulate the levels of wnd and restrain synaptic terminal growth at the neuromuscular junction (NMJ).</text>
</comment>
<comment type="pathway">
    <text evidence="2">Protein modification; protein ubiquitination.</text>
</comment>
<comment type="subunit">
    <text evidence="2">Component of an E3 ubiquitin ligase complex composed of hiw and Fsn.</text>
</comment>
<comment type="subcellular location">
    <subcellularLocation>
        <location evidence="2">Synapse</location>
    </subcellularLocation>
</comment>
<comment type="similarity">
    <text evidence="5">Belongs to the FBXO45/Fsn family.</text>
</comment>
<accession>B3MDR0</accession>
<feature type="chain" id="PRO_0000383310" description="F-box/SPRY domain-containing protein 1">
    <location>
        <begin position="1"/>
        <end position="255"/>
    </location>
</feature>
<feature type="domain" description="F-box" evidence="3">
    <location>
        <begin position="3"/>
        <end position="51"/>
    </location>
</feature>
<feature type="domain" description="B30.2/SPRY" evidence="4">
    <location>
        <begin position="61"/>
        <end position="253"/>
    </location>
</feature>
<name>FBSP1_DROAN</name>